<name>SL9A1_RABIT</name>
<proteinExistence type="evidence at protein level"/>
<comment type="function">
    <text evidence="2 3 9 11">Electroneutral Na(+) /H(+) antiporter that extrudes Na(+) in exchange for external protons driven by the inward sodium ion chemical gradient, protecting cells from acidification that occurs from metabolism (Probable) (PubMed:8244988). Exchanges intracellular H(+) ions for extracellular Na(+) in 1:1 stoichiometry (By similarity). Plays a key role in maintening intracellular pH neutral and cell volume, and thus is important for cell growth, proliferation, migration and survival. In addition, can transport lithium Li(+) and functions also as a Na(+)/Li(+) antiporter. SLC9A1 also functions in membrane anchoring and organization of scaffolding complexes that coordinate signaling inputs (By similarity).</text>
</comment>
<comment type="catalytic activity">
    <reaction evidence="9 11">
        <text>Na(+)(in) + H(+)(out) = Na(+)(out) + H(+)(in)</text>
        <dbReference type="Rhea" id="RHEA:29419"/>
        <dbReference type="ChEBI" id="CHEBI:15378"/>
        <dbReference type="ChEBI" id="CHEBI:29101"/>
    </reaction>
</comment>
<comment type="catalytic activity">
    <reaction evidence="2">
        <text>Li(+)(out) + H(+)(in) = Li(+)(in) + H(+)(out)</text>
        <dbReference type="Rhea" id="RHEA:72407"/>
        <dbReference type="ChEBI" id="CHEBI:15378"/>
        <dbReference type="ChEBI" id="CHEBI:49713"/>
    </reaction>
</comment>
<comment type="catalytic activity">
    <reaction evidence="2">
        <text>Li(+)(in) + Na(+)(out) = Li(+)(out) + Na(+)(in)</text>
        <dbReference type="Rhea" id="RHEA:72415"/>
        <dbReference type="ChEBI" id="CHEBI:29101"/>
        <dbReference type="ChEBI" id="CHEBI:49713"/>
    </reaction>
</comment>
<comment type="activity regulation">
    <text evidence="2 11">Activated at acidic pHs (Probable). Inhibited by cariporide and eniporide. Phosphatidylinositol 4,5-bisphosphate (PI(4,5)P2) and phosphatidylinositol 3,4,5-trisphosphate (PI(3,4,5)P3) bind and differentially regulate SLC9A1 activity (By similarity).</text>
</comment>
<comment type="biophysicochemical properties">
    <kinetics>
        <KM evidence="9">15 mM for Na(+)</KM>
    </kinetics>
</comment>
<comment type="subunit">
    <text evidence="2 3">Homodimer; dimerization is crucial for its function (By similarity). Oligomer (By similarity). Interacts with CALM in a calcium-dependent manner (By similarity). Interacts with TESC (By similarity). Interacts (via the juxtamembrane region of the cytoplasmic C-terminal domain) with CHP1; the interaction occurs at the plasma membrane in a calcium-dependent manner (By similarity). Interacts with CHP2; the interaction occurs in a calcium-dependent manner (By similarity). Interacts with EZR; regulates the cytoskeletal interactions of SLC9A1 and promotes stress fiber formation (By similarity).</text>
</comment>
<comment type="subcellular location">
    <subcellularLocation>
        <location evidence="2">Cell membrane</location>
        <topology evidence="2">Multi-pass membrane protein</topology>
    </subcellularLocation>
    <subcellularLocation>
        <location evidence="8">Basolateral cell membrane</location>
        <topology evidence="2">Multi-pass membrane protein</topology>
    </subcellularLocation>
</comment>
<comment type="tissue specificity">
    <text evidence="7 8">Kidney and intestine.</text>
</comment>
<comment type="PTM">
    <text evidence="3">Ubiquitinated, leading to its degradation by the proteasome. Ubiquitination is reduced by CHP1.</text>
</comment>
<comment type="PTM">
    <text evidence="2">O-glycosylated.</text>
</comment>
<comment type="PTM">
    <text evidence="3">Palmitoylated; may play a major role in SLC9A1 regulation.</text>
</comment>
<comment type="PTM">
    <text evidence="2">Phosphorylation at Ser-648 by AKT1 reduces SLC9A1 binding to CALM1.</text>
</comment>
<comment type="miscellaneous">
    <text evidence="2">Predicted models used for more than 20 years predicted 10-12 transmembrane segments. More recently, the structure of SLC9A1 has been solved and reveals that SLC9A1 possesses 13 transmembrane regions.</text>
</comment>
<comment type="similarity">
    <text evidence="10">Belongs to the monovalent cation:proton antiporter 1 (CPA1) transporter (TC 2.A.36) family.</text>
</comment>
<comment type="caution">
    <text evidence="10">The interacting region with TESC is conflicting: In human, it has been reported that SLC9A1 interacts with TESC via the juxtamembrane region of the cytoplasmic C-terminal domain, including residues 503-545. However, another publication has reported interaction with TESC via residues 633-816, the region of the cytoplasmic C-terminus more distal to the membrane.</text>
</comment>
<keyword id="KW-0050">Antiport</keyword>
<keyword id="KW-0112">Calmodulin-binding</keyword>
<keyword id="KW-1003">Cell membrane</keyword>
<keyword id="KW-0325">Glycoprotein</keyword>
<keyword id="KW-0406">Ion transport</keyword>
<keyword id="KW-0449">Lipoprotein</keyword>
<keyword id="KW-0472">Membrane</keyword>
<keyword id="KW-0564">Palmitate</keyword>
<keyword id="KW-0597">Phosphoprotein</keyword>
<keyword id="KW-1185">Reference proteome</keyword>
<keyword id="KW-0915">Sodium</keyword>
<keyword id="KW-0739">Sodium transport</keyword>
<keyword id="KW-0812">Transmembrane</keyword>
<keyword id="KW-1133">Transmembrane helix</keyword>
<keyword id="KW-0813">Transport</keyword>
<keyword id="KW-0832">Ubl conjugation</keyword>
<gene>
    <name type="primary">SLC9A1</name>
    <name type="synonym">NHE1</name>
</gene>
<accession>P23791</accession>
<feature type="chain" id="PRO_0000052350" description="Sodium/hydrogen exchanger 1">
    <location>
        <begin position="1"/>
        <end position="816"/>
    </location>
</feature>
<feature type="topological domain" description="Extracellular" evidence="10">
    <location>
        <begin position="1"/>
        <end position="98"/>
    </location>
</feature>
<feature type="transmembrane region" description="Helical; Name=1" evidence="2">
    <location>
        <begin position="99"/>
        <end position="121"/>
    </location>
</feature>
<feature type="topological domain" description="Cytoplasmic" evidence="10">
    <location>
        <begin position="122"/>
        <end position="130"/>
    </location>
</feature>
<feature type="transmembrane region" description="Helical; Name=2" evidence="2">
    <location>
        <begin position="131"/>
        <end position="148"/>
    </location>
</feature>
<feature type="topological domain" description="Extracellular" evidence="10">
    <location>
        <begin position="149"/>
        <end position="158"/>
    </location>
</feature>
<feature type="transmembrane region" description="Helical; Name=3" evidence="2">
    <location>
        <begin position="159"/>
        <end position="176"/>
    </location>
</feature>
<feature type="topological domain" description="Cytoplasmic" evidence="10">
    <location>
        <begin position="177"/>
        <end position="186"/>
    </location>
</feature>
<feature type="transmembrane region" description="Helical; Name=4" evidence="2">
    <location>
        <begin position="187"/>
        <end position="215"/>
    </location>
</feature>
<feature type="topological domain" description="Extracellular" evidence="10">
    <location>
        <begin position="216"/>
        <end position="222"/>
    </location>
</feature>
<feature type="transmembrane region" description="Helical; Name=5" evidence="2">
    <location>
        <begin position="223"/>
        <end position="249"/>
    </location>
</feature>
<feature type="topological domain" description="Cytoplasmic" evidence="10">
    <location>
        <begin position="250"/>
        <end position="252"/>
    </location>
</feature>
<feature type="transmembrane region" description="Helical; Name=6" evidence="2">
    <location>
        <begin position="253"/>
        <end position="283"/>
    </location>
</feature>
<feature type="topological domain" description="Extracellular" evidence="10">
    <location>
        <begin position="284"/>
        <end position="287"/>
    </location>
</feature>
<feature type="transmembrane region" description="Helical; Name=7" evidence="2">
    <location>
        <begin position="288"/>
        <end position="322"/>
    </location>
</feature>
<feature type="topological domain" description="Cytoplasmic" evidence="10">
    <location>
        <begin position="323"/>
        <end position="328"/>
    </location>
</feature>
<feature type="transmembrane region" description="Helical; Name=8" evidence="2">
    <location>
        <begin position="329"/>
        <end position="341"/>
    </location>
</feature>
<feature type="topological domain" description="Extracellular" evidence="10">
    <location>
        <begin position="342"/>
        <end position="350"/>
    </location>
</feature>
<feature type="transmembrane region" description="Helical; Name=9" evidence="2">
    <location>
        <begin position="351"/>
        <end position="371"/>
    </location>
</feature>
<feature type="topological domain" description="Cytoplasmic" evidence="10">
    <location>
        <begin position="372"/>
        <end position="373"/>
    </location>
</feature>
<feature type="transmembrane region" description="Helical; Name=10" evidence="2">
    <location>
        <begin position="374"/>
        <end position="404"/>
    </location>
</feature>
<feature type="topological domain" description="Extracellular" evidence="10">
    <location>
        <begin position="405"/>
        <end position="410"/>
    </location>
</feature>
<feature type="transmembrane region" description="Helical; Name=11" evidence="2">
    <location>
        <begin position="411"/>
        <end position="438"/>
    </location>
</feature>
<feature type="topological domain" description="Cytoplasmic" evidence="10">
    <location>
        <begin position="439"/>
        <end position="444"/>
    </location>
</feature>
<feature type="transmembrane region" description="Helical; Name=12" evidence="2">
    <location>
        <begin position="445"/>
        <end position="469"/>
    </location>
</feature>
<feature type="topological domain" description="Extracellular" evidence="10">
    <location>
        <begin position="470"/>
        <end position="475"/>
    </location>
</feature>
<feature type="transmembrane region" description="Helical; Name=13" evidence="2">
    <location>
        <begin position="476"/>
        <end position="505"/>
    </location>
</feature>
<feature type="topological domain" description="Cytoplasmic" evidence="10">
    <location>
        <begin position="506"/>
        <end position="816"/>
    </location>
</feature>
<feature type="region of interest" description="Disordered" evidence="6">
    <location>
        <begin position="37"/>
        <end position="79"/>
    </location>
</feature>
<feature type="region of interest" description="Interaction with TESC" evidence="2">
    <location>
        <begin position="503"/>
        <end position="545"/>
    </location>
</feature>
<feature type="region of interest" description="PI(4,5)P2-binding region" evidence="3">
    <location>
        <begin position="509"/>
        <end position="516"/>
    </location>
</feature>
<feature type="region of interest" description="Interaction with CHP2" evidence="2">
    <location>
        <begin position="515"/>
        <end position="545"/>
    </location>
</feature>
<feature type="region of interest" description="Confers pH-dependent PI(4,5)P2 binding" evidence="2">
    <location>
        <begin position="540"/>
        <end position="545"/>
    </location>
</feature>
<feature type="region of interest" description="PI(4,5)P2-binding region" evidence="3">
    <location>
        <begin position="552"/>
        <end position="560"/>
    </location>
</feature>
<feature type="region of interest" description="Interaction with CALM1" evidence="2">
    <location>
        <begin position="633"/>
        <end position="816"/>
    </location>
</feature>
<feature type="region of interest" description="Interaction with TESC" evidence="2">
    <location>
        <begin position="633"/>
        <end position="816"/>
    </location>
</feature>
<feature type="region of interest" description="Interaction with PPP3CA" evidence="2">
    <location>
        <begin position="684"/>
        <end position="687"/>
    </location>
</feature>
<feature type="region of interest" description="Interaction with PPP3CA" evidence="2">
    <location>
        <begin position="715"/>
        <end position="720"/>
    </location>
</feature>
<feature type="region of interest" description="Disordered" evidence="6">
    <location>
        <begin position="748"/>
        <end position="816"/>
    </location>
</feature>
<feature type="compositionally biased region" description="Polar residues" evidence="6">
    <location>
        <begin position="37"/>
        <end position="50"/>
    </location>
</feature>
<feature type="compositionally biased region" description="Polar residues" evidence="6">
    <location>
        <begin position="783"/>
        <end position="792"/>
    </location>
</feature>
<feature type="site" description="Channel pore-lining" evidence="1">
    <location>
        <position position="161"/>
    </location>
</feature>
<feature type="modified residue" description="Phosphoserine" evidence="2">
    <location>
        <position position="599"/>
    </location>
</feature>
<feature type="modified residue" description="Phosphoserine" evidence="2">
    <location>
        <position position="602"/>
    </location>
</feature>
<feature type="modified residue" description="Phosphothreonine" evidence="4">
    <location>
        <position position="603"/>
    </location>
</feature>
<feature type="modified residue" description="Phosphoserine" evidence="2">
    <location>
        <position position="605"/>
    </location>
</feature>
<feature type="modified residue" description="Phosphoserine" evidence="2">
    <location>
        <position position="648"/>
    </location>
</feature>
<feature type="modified residue" description="Phosphoserine" evidence="2">
    <location>
        <position position="693"/>
    </location>
</feature>
<feature type="modified residue" description="Phosphoserine" evidence="2">
    <location>
        <position position="697"/>
    </location>
</feature>
<feature type="modified residue" description="Phosphoserine" evidence="2">
    <location>
        <position position="703"/>
    </location>
</feature>
<feature type="modified residue" description="Phosphoserine" evidence="2">
    <location>
        <position position="723"/>
    </location>
</feature>
<feature type="modified residue" description="Phosphoserine" evidence="2">
    <location>
        <position position="726"/>
    </location>
</feature>
<feature type="modified residue" description="Phosphoserine" evidence="2">
    <location>
        <position position="729"/>
    </location>
</feature>
<feature type="modified residue" description="Phosphoserine" evidence="2">
    <location>
        <position position="786"/>
    </location>
</feature>
<feature type="modified residue" description="Phosphoserine" evidence="4">
    <location>
        <position position="788"/>
    </location>
</feature>
<feature type="modified residue" description="Phosphoserine" evidence="3">
    <location>
        <position position="797"/>
    </location>
</feature>
<feature type="glycosylation site" description="N-linked (GlcNAc...) asparagine" evidence="5">
    <location>
        <position position="75"/>
    </location>
</feature>
<feature type="sequence conflict" description="In Ref. 2; CAA43721." evidence="10" ref="2">
    <original>V</original>
    <variation>A</variation>
    <location>
        <position position="242"/>
    </location>
</feature>
<feature type="sequence conflict" description="In Ref. 2; CAA43721." evidence="10" ref="2">
    <original>K</original>
    <variation>E</variation>
    <location>
        <position position="569"/>
    </location>
</feature>
<dbReference type="EMBL" id="X59935">
    <property type="protein sequence ID" value="CAA42558.1"/>
    <property type="molecule type" value="mRNA"/>
</dbReference>
<dbReference type="EMBL" id="X61504">
    <property type="protein sequence ID" value="CAA43721.1"/>
    <property type="molecule type" value="mRNA"/>
</dbReference>
<dbReference type="EMBL" id="X56536">
    <property type="protein sequence ID" value="CAA39881.1"/>
    <property type="molecule type" value="mRNA"/>
</dbReference>
<dbReference type="PIR" id="S16328">
    <property type="entry name" value="S16328"/>
</dbReference>
<dbReference type="RefSeq" id="NP_001095191.1">
    <property type="nucleotide sequence ID" value="NM_001101721.1"/>
</dbReference>
<dbReference type="BMRB" id="P23791"/>
<dbReference type="SMR" id="P23791"/>
<dbReference type="BioGRID" id="1172605">
    <property type="interactions" value="43"/>
</dbReference>
<dbReference type="FunCoup" id="P23791">
    <property type="interactions" value="70"/>
</dbReference>
<dbReference type="STRING" id="9986.ENSOCUP00000022999"/>
<dbReference type="BindingDB" id="P23791"/>
<dbReference type="ChEMBL" id="CHEMBL2865"/>
<dbReference type="GlyCosmos" id="P23791">
    <property type="glycosylation" value="2 sites, No reported glycans"/>
</dbReference>
<dbReference type="PaxDb" id="9986-ENSOCUP00000022999"/>
<dbReference type="Ensembl" id="ENSOCUT00000022296.3">
    <property type="protein sequence ID" value="ENSOCUP00000022999.3"/>
    <property type="gene ID" value="ENSOCUG00000023061.3"/>
</dbReference>
<dbReference type="GeneID" id="100009586"/>
<dbReference type="KEGG" id="ocu:100009586"/>
<dbReference type="CTD" id="6548"/>
<dbReference type="eggNOG" id="KOG1966">
    <property type="taxonomic scope" value="Eukaryota"/>
</dbReference>
<dbReference type="GeneTree" id="ENSGT00940000156338"/>
<dbReference type="InParanoid" id="P23791"/>
<dbReference type="OrthoDB" id="196264at2759"/>
<dbReference type="PRO" id="PR:P23791"/>
<dbReference type="Proteomes" id="UP000001811">
    <property type="component" value="Chromosome 13"/>
</dbReference>
<dbReference type="Bgee" id="ENSOCUG00000023061">
    <property type="expression patterns" value="Expressed in uterus and 18 other cell types or tissues"/>
</dbReference>
<dbReference type="ExpressionAtlas" id="P23791">
    <property type="expression patterns" value="baseline"/>
</dbReference>
<dbReference type="GO" id="GO:0016324">
    <property type="term" value="C:apical plasma membrane"/>
    <property type="evidence" value="ECO:0007669"/>
    <property type="project" value="Ensembl"/>
</dbReference>
<dbReference type="GO" id="GO:0016323">
    <property type="term" value="C:basolateral plasma membrane"/>
    <property type="evidence" value="ECO:0000314"/>
    <property type="project" value="UniProtKB"/>
</dbReference>
<dbReference type="GO" id="GO:0090533">
    <property type="term" value="C:cation-transporting ATPase complex"/>
    <property type="evidence" value="ECO:0007669"/>
    <property type="project" value="Ensembl"/>
</dbReference>
<dbReference type="GO" id="GO:0005737">
    <property type="term" value="C:cytoplasm"/>
    <property type="evidence" value="ECO:0000250"/>
    <property type="project" value="UniProtKB"/>
</dbReference>
<dbReference type="GO" id="GO:0045121">
    <property type="term" value="C:membrane raft"/>
    <property type="evidence" value="ECO:0007669"/>
    <property type="project" value="Ensembl"/>
</dbReference>
<dbReference type="GO" id="GO:0005654">
    <property type="term" value="C:nucleoplasm"/>
    <property type="evidence" value="ECO:0007669"/>
    <property type="project" value="Ensembl"/>
</dbReference>
<dbReference type="GO" id="GO:0005886">
    <property type="term" value="C:plasma membrane"/>
    <property type="evidence" value="ECO:0000250"/>
    <property type="project" value="UniProtKB"/>
</dbReference>
<dbReference type="GO" id="GO:0048306">
    <property type="term" value="F:calcium-dependent protein binding"/>
    <property type="evidence" value="ECO:0000250"/>
    <property type="project" value="UniProtKB"/>
</dbReference>
<dbReference type="GO" id="GO:0005516">
    <property type="term" value="F:calmodulin binding"/>
    <property type="evidence" value="ECO:0007669"/>
    <property type="project" value="UniProtKB-KW"/>
</dbReference>
<dbReference type="GO" id="GO:0042802">
    <property type="term" value="F:identical protein binding"/>
    <property type="evidence" value="ECO:0007669"/>
    <property type="project" value="Ensembl"/>
</dbReference>
<dbReference type="GO" id="GO:0005543">
    <property type="term" value="F:phospholipid binding"/>
    <property type="evidence" value="ECO:0007669"/>
    <property type="project" value="Ensembl"/>
</dbReference>
<dbReference type="GO" id="GO:0015386">
    <property type="term" value="F:potassium:proton antiporter activity"/>
    <property type="evidence" value="ECO:0007669"/>
    <property type="project" value="TreeGrafter"/>
</dbReference>
<dbReference type="GO" id="GO:0030346">
    <property type="term" value="F:protein phosphatase 2B binding"/>
    <property type="evidence" value="ECO:0007669"/>
    <property type="project" value="Ensembl"/>
</dbReference>
<dbReference type="GO" id="GO:0015385">
    <property type="term" value="F:sodium:proton antiporter activity"/>
    <property type="evidence" value="ECO:0000314"/>
    <property type="project" value="UniProtKB"/>
</dbReference>
<dbReference type="GO" id="GO:0055007">
    <property type="term" value="P:cardiac muscle cell differentiation"/>
    <property type="evidence" value="ECO:0007669"/>
    <property type="project" value="Ensembl"/>
</dbReference>
<dbReference type="GO" id="GO:0071468">
    <property type="term" value="P:cellular response to acidic pH"/>
    <property type="evidence" value="ECO:0000250"/>
    <property type="project" value="UniProtKB"/>
</dbReference>
<dbReference type="GO" id="GO:0071872">
    <property type="term" value="P:cellular response to epinephrine stimulus"/>
    <property type="evidence" value="ECO:0007669"/>
    <property type="project" value="Ensembl"/>
</dbReference>
<dbReference type="GO" id="GO:0006883">
    <property type="term" value="P:intracellular sodium ion homeostasis"/>
    <property type="evidence" value="ECO:0007669"/>
    <property type="project" value="Ensembl"/>
</dbReference>
<dbReference type="GO" id="GO:0070886">
    <property type="term" value="P:positive regulation of calcineurin-NFAT signaling cascade"/>
    <property type="evidence" value="ECO:0007669"/>
    <property type="project" value="Ensembl"/>
</dbReference>
<dbReference type="GO" id="GO:0010613">
    <property type="term" value="P:positive regulation of cardiac muscle hypertrophy"/>
    <property type="evidence" value="ECO:0007669"/>
    <property type="project" value="Ensembl"/>
</dbReference>
<dbReference type="GO" id="GO:0098735">
    <property type="term" value="P:positive regulation of the force of heart contraction"/>
    <property type="evidence" value="ECO:0007669"/>
    <property type="project" value="Ensembl"/>
</dbReference>
<dbReference type="GO" id="GO:0045944">
    <property type="term" value="P:positive regulation of transcription by RNA polymerase II"/>
    <property type="evidence" value="ECO:0007669"/>
    <property type="project" value="Ensembl"/>
</dbReference>
<dbReference type="GO" id="GO:0051259">
    <property type="term" value="P:protein complex oligomerization"/>
    <property type="evidence" value="ECO:0000250"/>
    <property type="project" value="UniProtKB"/>
</dbReference>
<dbReference type="GO" id="GO:0010882">
    <property type="term" value="P:regulation of cardiac muscle contraction by calcium ion signaling"/>
    <property type="evidence" value="ECO:0007669"/>
    <property type="project" value="Ensembl"/>
</dbReference>
<dbReference type="GO" id="GO:0051453">
    <property type="term" value="P:regulation of intracellular pH"/>
    <property type="evidence" value="ECO:0000250"/>
    <property type="project" value="UniProtKB"/>
</dbReference>
<dbReference type="GO" id="GO:0006885">
    <property type="term" value="P:regulation of pH"/>
    <property type="evidence" value="ECO:0000250"/>
    <property type="project" value="UniProtKB"/>
</dbReference>
<dbReference type="GO" id="GO:0086092">
    <property type="term" value="P:regulation of the force of heart contraction by cardiac conduction"/>
    <property type="evidence" value="ECO:0007669"/>
    <property type="project" value="Ensembl"/>
</dbReference>
<dbReference type="GO" id="GO:0010447">
    <property type="term" value="P:response to acidic pH"/>
    <property type="evidence" value="ECO:0000250"/>
    <property type="project" value="UniProtKB"/>
</dbReference>
<dbReference type="GO" id="GO:0035994">
    <property type="term" value="P:response to muscle stretch"/>
    <property type="evidence" value="ECO:0007669"/>
    <property type="project" value="Ensembl"/>
</dbReference>
<dbReference type="GO" id="GO:0036376">
    <property type="term" value="P:sodium ion export across plasma membrane"/>
    <property type="evidence" value="ECO:0000250"/>
    <property type="project" value="UniProtKB"/>
</dbReference>
<dbReference type="GO" id="GO:0098719">
    <property type="term" value="P:sodium ion import across plasma membrane"/>
    <property type="evidence" value="ECO:0007669"/>
    <property type="project" value="Ensembl"/>
</dbReference>
<dbReference type="GO" id="GO:0048863">
    <property type="term" value="P:stem cell differentiation"/>
    <property type="evidence" value="ECO:0007669"/>
    <property type="project" value="Ensembl"/>
</dbReference>
<dbReference type="Gene3D" id="6.10.140.1330">
    <property type="match status" value="1"/>
</dbReference>
<dbReference type="Gene3D" id="6.10.250.1040">
    <property type="match status" value="1"/>
</dbReference>
<dbReference type="Gene3D" id="6.10.250.2020">
    <property type="match status" value="1"/>
</dbReference>
<dbReference type="InterPro" id="IPR018422">
    <property type="entry name" value="Cation/H_exchanger_CPA1"/>
</dbReference>
<dbReference type="InterPro" id="IPR006153">
    <property type="entry name" value="Cation/H_exchanger_TM"/>
</dbReference>
<dbReference type="InterPro" id="IPR004709">
    <property type="entry name" value="NaH_exchanger"/>
</dbReference>
<dbReference type="InterPro" id="IPR001970">
    <property type="entry name" value="NHE-1-like"/>
</dbReference>
<dbReference type="InterPro" id="IPR032103">
    <property type="entry name" value="NHE_CaM-bd"/>
</dbReference>
<dbReference type="NCBIfam" id="TIGR00840">
    <property type="entry name" value="b_cpa1"/>
    <property type="match status" value="1"/>
</dbReference>
<dbReference type="PANTHER" id="PTHR10110">
    <property type="entry name" value="SODIUM/HYDROGEN EXCHANGER"/>
    <property type="match status" value="1"/>
</dbReference>
<dbReference type="PANTHER" id="PTHR10110:SF59">
    <property type="entry name" value="SODIUM_HYDROGEN EXCHANGER 1"/>
    <property type="match status" value="1"/>
</dbReference>
<dbReference type="Pfam" id="PF00999">
    <property type="entry name" value="Na_H_Exchanger"/>
    <property type="match status" value="1"/>
</dbReference>
<dbReference type="Pfam" id="PF16644">
    <property type="entry name" value="NEXCaM_BD"/>
    <property type="match status" value="1"/>
</dbReference>
<dbReference type="PRINTS" id="PR01084">
    <property type="entry name" value="NAHEXCHNGR"/>
</dbReference>
<dbReference type="PRINTS" id="PR01085">
    <property type="entry name" value="NAHEXCHNGR1"/>
</dbReference>
<evidence type="ECO:0000250" key="1"/>
<evidence type="ECO:0000250" key="2">
    <source>
        <dbReference type="UniProtKB" id="P19634"/>
    </source>
</evidence>
<evidence type="ECO:0000250" key="3">
    <source>
        <dbReference type="UniProtKB" id="P26431"/>
    </source>
</evidence>
<evidence type="ECO:0000250" key="4">
    <source>
        <dbReference type="UniProtKB" id="Q61165"/>
    </source>
</evidence>
<evidence type="ECO:0000255" key="5"/>
<evidence type="ECO:0000256" key="6">
    <source>
        <dbReference type="SAM" id="MobiDB-lite"/>
    </source>
</evidence>
<evidence type="ECO:0000269" key="7">
    <source>
    </source>
</evidence>
<evidence type="ECO:0000269" key="8">
    <source>
    </source>
</evidence>
<evidence type="ECO:0000269" key="9">
    <source>
    </source>
</evidence>
<evidence type="ECO:0000305" key="10"/>
<evidence type="ECO:0000305" key="11">
    <source>
    </source>
</evidence>
<organism>
    <name type="scientific">Oryctolagus cuniculus</name>
    <name type="common">Rabbit</name>
    <dbReference type="NCBI Taxonomy" id="9986"/>
    <lineage>
        <taxon>Eukaryota</taxon>
        <taxon>Metazoa</taxon>
        <taxon>Chordata</taxon>
        <taxon>Craniata</taxon>
        <taxon>Vertebrata</taxon>
        <taxon>Euteleostomi</taxon>
        <taxon>Mammalia</taxon>
        <taxon>Eutheria</taxon>
        <taxon>Euarchontoglires</taxon>
        <taxon>Glires</taxon>
        <taxon>Lagomorpha</taxon>
        <taxon>Leporidae</taxon>
        <taxon>Oryctolagus</taxon>
    </lineage>
</organism>
<reference key="1">
    <citation type="journal article" date="1991" name="EMBO J.">
        <title>Molecular cloning and expression of a cDNA encoding the rabbit ileal villus cell basolateral membrane Na+/H+ exchanger.</title>
        <authorList>
            <person name="Tse C.-M."/>
            <person name="Ma A.I."/>
            <person name="Yang V.W."/>
            <person name="Watson A.J.M."/>
            <person name="Levine S."/>
            <person name="Montrose M.H."/>
            <person name="Potter J."/>
            <person name="Sardet C."/>
            <person name="Pouyssegur J."/>
            <person name="Donowitz M."/>
        </authorList>
    </citation>
    <scope>NUCLEOTIDE SEQUENCE [MRNA]</scope>
    <scope>TISSUE SPECIFICITY</scope>
    <scope>SUBCELLULAR LOCATION</scope>
    <source>
        <strain>New Zealand white</strain>
        <tissue>Ileal villus</tissue>
    </source>
</reference>
<reference key="2">
    <citation type="journal article" date="1991" name="Biochim. Biophys. Acta">
        <title>Cloning, sequence, and tissue distribution of a rabbit renal Na+/H+ exchanger transcript.</title>
        <authorList>
            <person name="Hildebrandt F."/>
            <person name="Pizzonia J.H."/>
            <person name="Reilly R.F."/>
            <person name="Reboucas N.A."/>
            <person name="Sardet C."/>
            <person name="Pouyssegur J."/>
            <person name="Slayman C.W."/>
            <person name="Aronson P.S."/>
            <person name="Igarashi P."/>
        </authorList>
    </citation>
    <scope>NUCLEOTIDE SEQUENCE [MRNA]</scope>
    <scope>TISSUE SPECIFICITY</scope>
    <source>
        <tissue>Kidney</tissue>
    </source>
</reference>
<reference key="3">
    <citation type="journal article" date="1991" name="FEBS Lett.">
        <title>Identification of the protein and cDNA of the cardiac Na+/H+ exchanger.</title>
        <authorList>
            <person name="Fliegel L."/>
            <person name="Sardet C."/>
            <person name="Pouyssegur J."/>
            <person name="Barr A."/>
        </authorList>
    </citation>
    <scope>NUCLEOTIDE SEQUENCE [MRNA] OF 472-816</scope>
    <source>
        <strain>New Zealand white</strain>
        <tissue>Heart muscle</tissue>
    </source>
</reference>
<reference key="4">
    <citation type="journal article" date="1982" name="Nature">
        <title>Modifier role of internal H+ in activating the Na+-H+ exchanger in renal microvillus membrane vesicles.</title>
        <authorList>
            <person name="Aronson P.S."/>
            <person name="Nee J."/>
            <person name="Suhm M.A."/>
        </authorList>
    </citation>
    <scope>FUNCTION</scope>
    <scope>TRANSPORTER ACTIVITY</scope>
    <scope>ACTIVITY REGULATION</scope>
</reference>
<reference key="5">
    <citation type="journal article" date="1993" name="J. Biol. Chem.">
        <title>Kinetics and regulation of three cloned mammalian Na+/H+ exchangers stably expressed in a fibroblast cell line.</title>
        <authorList>
            <person name="Levine S.A."/>
            <person name="Montrose M.H."/>
            <person name="Tse C.M."/>
            <person name="Donowitz M."/>
        </authorList>
    </citation>
    <scope>FUNCTION</scope>
    <scope>TRANSPORTER ACTIVITY</scope>
    <scope>BIOPHYSICOCHEMICAL PROPERTIES</scope>
</reference>
<protein>
    <recommendedName>
        <fullName>Sodium/hydrogen exchanger 1</fullName>
    </recommendedName>
    <alternativeName>
        <fullName>Na(+)/H(+) exchanger 1</fullName>
        <shortName>NHE-1</shortName>
    </alternativeName>
    <alternativeName>
        <fullName>Solute carrier family 9 member 1</fullName>
    </alternativeName>
</protein>
<sequence>MLLWSAVRGLSPPRIVPSLLVVVALAGLLPGLRSHGLQLSPTDSTTPDSQPSRERSIGDVTTAPPEVTPESRPVNRSVTEHGMKPRKAFPVLGIDYTHVRTPFEISLWILLACLMKIGFHVIPTISSIVPESCLLIVVGLLVGGLIKGVGEKPPFLQSEVFFLFLLPPIILDAGYFLPLRQFTENLGTILIFAVVGTLWNAFFLGGLMYAVCLVGGEQINNIGLLDNLLFGSIISAVDPVAVLAVFEEIHINELLHILVFGESLLNDAVTVVLYHLFEEFANYDHVGIVDIVLGFLSFFVVALGGVFVGVVYGVIAAFTSRFTAHIRVIEPLFVFLYSYMAYLSAELFHLSGIMALIASGVVMRPYVEANISHKSHTTIKYFLKMWSSVSETLIFIFLGVSTVAGSHHWNWTFVISTLLFCLIARVLGVLGLTWFINKFRIVKLTPKDQFIIAYGGLRGAIAFSLGYLLDKKHFPMCDLFLTAIITVIFFTVFVQGMTIRPLVDLLAVKKKQETKRSINEEIHTQFLDHLLTGIEDICGHYGHHHWKDKLNRFNKKYVKKCLIAGERSKEPQLIAFYHKMEMKQAIELVESGGMGKIPSAVSTVSMQNIHPKALPAERILPALSKDKEEEIRKILRNNLQKTRQRLRSYNRHTLVADPYEEAWNQMLLRRQKARQLEQKINNYLTVPAHKLDSPTMSRARIGSDPLAYEPKADLPVITIDPASPQSPESVDLVNEELKGKVLGLSREPRVAEEAAEEDEDGGIVMRPKEPSSPGTDDVFSPAPSDSPSSQRMQRCLSDPGPHPEPGEGEPFIPKGQ</sequence>